<dbReference type="EC" id="2.1.1.-" evidence="1"/>
<dbReference type="EMBL" id="CP000885">
    <property type="protein sequence ID" value="ABX42670.1"/>
    <property type="molecule type" value="Genomic_DNA"/>
</dbReference>
<dbReference type="RefSeq" id="WP_012200324.1">
    <property type="nucleotide sequence ID" value="NC_010001.1"/>
</dbReference>
<dbReference type="SMR" id="A9KKT8"/>
<dbReference type="STRING" id="357809.Cphy_2309"/>
<dbReference type="KEGG" id="cpy:Cphy_2309"/>
<dbReference type="eggNOG" id="COG2264">
    <property type="taxonomic scope" value="Bacteria"/>
</dbReference>
<dbReference type="HOGENOM" id="CLU_049382_0_1_9"/>
<dbReference type="OrthoDB" id="9785995at2"/>
<dbReference type="Proteomes" id="UP000000370">
    <property type="component" value="Chromosome"/>
</dbReference>
<dbReference type="GO" id="GO:0005737">
    <property type="term" value="C:cytoplasm"/>
    <property type="evidence" value="ECO:0007669"/>
    <property type="project" value="UniProtKB-SubCell"/>
</dbReference>
<dbReference type="GO" id="GO:0016279">
    <property type="term" value="F:protein-lysine N-methyltransferase activity"/>
    <property type="evidence" value="ECO:0007669"/>
    <property type="project" value="RHEA"/>
</dbReference>
<dbReference type="GO" id="GO:0032259">
    <property type="term" value="P:methylation"/>
    <property type="evidence" value="ECO:0007669"/>
    <property type="project" value="UniProtKB-KW"/>
</dbReference>
<dbReference type="CDD" id="cd02440">
    <property type="entry name" value="AdoMet_MTases"/>
    <property type="match status" value="1"/>
</dbReference>
<dbReference type="Gene3D" id="3.40.50.150">
    <property type="entry name" value="Vaccinia Virus protein VP39"/>
    <property type="match status" value="1"/>
</dbReference>
<dbReference type="HAMAP" id="MF_00735">
    <property type="entry name" value="Methyltr_PrmA"/>
    <property type="match status" value="1"/>
</dbReference>
<dbReference type="InterPro" id="IPR050078">
    <property type="entry name" value="Ribosomal_L11_MeTrfase_PrmA"/>
</dbReference>
<dbReference type="InterPro" id="IPR004498">
    <property type="entry name" value="Ribosomal_PrmA_MeTrfase"/>
</dbReference>
<dbReference type="InterPro" id="IPR029063">
    <property type="entry name" value="SAM-dependent_MTases_sf"/>
</dbReference>
<dbReference type="NCBIfam" id="TIGR00406">
    <property type="entry name" value="prmA"/>
    <property type="match status" value="1"/>
</dbReference>
<dbReference type="PANTHER" id="PTHR43648">
    <property type="entry name" value="ELECTRON TRANSFER FLAVOPROTEIN BETA SUBUNIT LYSINE METHYLTRANSFERASE"/>
    <property type="match status" value="1"/>
</dbReference>
<dbReference type="PANTHER" id="PTHR43648:SF1">
    <property type="entry name" value="ELECTRON TRANSFER FLAVOPROTEIN BETA SUBUNIT LYSINE METHYLTRANSFERASE"/>
    <property type="match status" value="1"/>
</dbReference>
<dbReference type="Pfam" id="PF06325">
    <property type="entry name" value="PrmA"/>
    <property type="match status" value="1"/>
</dbReference>
<dbReference type="PIRSF" id="PIRSF000401">
    <property type="entry name" value="RPL11_MTase"/>
    <property type="match status" value="1"/>
</dbReference>
<dbReference type="SUPFAM" id="SSF53335">
    <property type="entry name" value="S-adenosyl-L-methionine-dependent methyltransferases"/>
    <property type="match status" value="1"/>
</dbReference>
<evidence type="ECO:0000255" key="1">
    <source>
        <dbReference type="HAMAP-Rule" id="MF_00735"/>
    </source>
</evidence>
<sequence>MKWKKLSLETTTEAVDLVCDMLLSLGIEGIEVVDKVPITEEEKKRMFIDILPELGEDDGIATINFYLENEEDLPSLKVSIQEGLDELRDFVEVGSGKLSLSETEDKDWINNWKEFFKPFRVDDTIVIKPTWEKLEERKETDLVIEIDPGTAFGTGAHETTKLCILNIKKYMQPGATLLDVGCGSGILTIIGRKLGAKTAVAIDIDENAVSASKENCDVNQLEAVLCQSSDSSTRTEGRIELFDGNVIEDRGLRERIGLNSYDFVVANILADIIIPLSAVVGEFMKPGAYFISSGIIDMKAEEVKEAILRNGFIIEEITTMGDWTSIVAKKPNK</sequence>
<keyword id="KW-0963">Cytoplasm</keyword>
<keyword id="KW-0489">Methyltransferase</keyword>
<keyword id="KW-1185">Reference proteome</keyword>
<keyword id="KW-0949">S-adenosyl-L-methionine</keyword>
<keyword id="KW-0808">Transferase</keyword>
<feature type="chain" id="PRO_1000192609" description="Ribosomal protein L11 methyltransferase">
    <location>
        <begin position="1"/>
        <end position="333"/>
    </location>
</feature>
<feature type="binding site" evidence="1">
    <location>
        <position position="160"/>
    </location>
    <ligand>
        <name>S-adenosyl-L-methionine</name>
        <dbReference type="ChEBI" id="CHEBI:59789"/>
    </ligand>
</feature>
<feature type="binding site" evidence="1">
    <location>
        <position position="181"/>
    </location>
    <ligand>
        <name>S-adenosyl-L-methionine</name>
        <dbReference type="ChEBI" id="CHEBI:59789"/>
    </ligand>
</feature>
<feature type="binding site" evidence="1">
    <location>
        <position position="203"/>
    </location>
    <ligand>
        <name>S-adenosyl-L-methionine</name>
        <dbReference type="ChEBI" id="CHEBI:59789"/>
    </ligand>
</feature>
<feature type="binding site" evidence="1">
    <location>
        <position position="267"/>
    </location>
    <ligand>
        <name>S-adenosyl-L-methionine</name>
        <dbReference type="ChEBI" id="CHEBI:59789"/>
    </ligand>
</feature>
<comment type="function">
    <text evidence="1">Methylates ribosomal protein L11.</text>
</comment>
<comment type="catalytic activity">
    <reaction evidence="1">
        <text>L-lysyl-[protein] + 3 S-adenosyl-L-methionine = N(6),N(6),N(6)-trimethyl-L-lysyl-[protein] + 3 S-adenosyl-L-homocysteine + 3 H(+)</text>
        <dbReference type="Rhea" id="RHEA:54192"/>
        <dbReference type="Rhea" id="RHEA-COMP:9752"/>
        <dbReference type="Rhea" id="RHEA-COMP:13826"/>
        <dbReference type="ChEBI" id="CHEBI:15378"/>
        <dbReference type="ChEBI" id="CHEBI:29969"/>
        <dbReference type="ChEBI" id="CHEBI:57856"/>
        <dbReference type="ChEBI" id="CHEBI:59789"/>
        <dbReference type="ChEBI" id="CHEBI:61961"/>
    </reaction>
</comment>
<comment type="subcellular location">
    <subcellularLocation>
        <location evidence="1">Cytoplasm</location>
    </subcellularLocation>
</comment>
<comment type="similarity">
    <text evidence="1">Belongs to the methyltransferase superfamily. PrmA family.</text>
</comment>
<gene>
    <name evidence="1" type="primary">prmA</name>
    <name type="ordered locus">Cphy_2309</name>
</gene>
<reference key="1">
    <citation type="submission" date="2007-11" db="EMBL/GenBank/DDBJ databases">
        <title>Complete genome sequence of Clostridium phytofermentans ISDg.</title>
        <authorList>
            <person name="Leschine S.B."/>
            <person name="Warnick T.A."/>
            <person name="Blanchard J.L."/>
            <person name="Schnell D.J."/>
            <person name="Petit E.L."/>
            <person name="LaTouf W.G."/>
            <person name="Copeland A."/>
            <person name="Lucas S."/>
            <person name="Lapidus A."/>
            <person name="Barry K."/>
            <person name="Glavina del Rio T."/>
            <person name="Dalin E."/>
            <person name="Tice H."/>
            <person name="Pitluck S."/>
            <person name="Kiss H."/>
            <person name="Brettin T."/>
            <person name="Bruce D."/>
            <person name="Detter J.C."/>
            <person name="Han C."/>
            <person name="Kuske C."/>
            <person name="Schmutz J."/>
            <person name="Larimer F."/>
            <person name="Land M."/>
            <person name="Hauser L."/>
            <person name="Kyrpides N."/>
            <person name="Kim E.A."/>
            <person name="Richardson P."/>
        </authorList>
    </citation>
    <scope>NUCLEOTIDE SEQUENCE [LARGE SCALE GENOMIC DNA]</scope>
    <source>
        <strain>ATCC 700394 / DSM 18823 / ISDg</strain>
    </source>
</reference>
<protein>
    <recommendedName>
        <fullName evidence="1">Ribosomal protein L11 methyltransferase</fullName>
        <shortName evidence="1">L11 Mtase</shortName>
        <ecNumber evidence="1">2.1.1.-</ecNumber>
    </recommendedName>
</protein>
<name>PRMA_LACP7</name>
<proteinExistence type="inferred from homology"/>
<organism>
    <name type="scientific">Lachnoclostridium phytofermentans (strain ATCC 700394 / DSM 18823 / ISDg)</name>
    <name type="common">Clostridium phytofermentans</name>
    <dbReference type="NCBI Taxonomy" id="357809"/>
    <lineage>
        <taxon>Bacteria</taxon>
        <taxon>Bacillati</taxon>
        <taxon>Bacillota</taxon>
        <taxon>Clostridia</taxon>
        <taxon>Lachnospirales</taxon>
        <taxon>Lachnospiraceae</taxon>
    </lineage>
</organism>
<accession>A9KKT8</accession>